<feature type="chain" id="PRO_0000062723" description="Probable peptidoglycan glycosyltransferase FtsW">
    <location>
        <begin position="1"/>
        <end position="403"/>
    </location>
</feature>
<feature type="topological domain" description="Cytoplasmic" evidence="2">
    <location>
        <begin position="1"/>
        <end position="13"/>
    </location>
</feature>
<feature type="transmembrane region" description="Helical" evidence="2">
    <location>
        <begin position="14"/>
        <end position="34"/>
    </location>
</feature>
<feature type="topological domain" description="Extracellular" evidence="2">
    <location>
        <begin position="35"/>
        <end position="51"/>
    </location>
</feature>
<feature type="transmembrane region" description="Helical" evidence="2">
    <location>
        <begin position="52"/>
        <end position="72"/>
    </location>
</feature>
<feature type="topological domain" description="Cytoplasmic" evidence="2">
    <location>
        <begin position="73"/>
        <end position="80"/>
    </location>
</feature>
<feature type="transmembrane region" description="Helical" evidence="2">
    <location>
        <begin position="81"/>
        <end position="101"/>
    </location>
</feature>
<feature type="topological domain" description="Extracellular" evidence="2">
    <location>
        <begin position="102"/>
        <end position="108"/>
    </location>
</feature>
<feature type="transmembrane region" description="Helical" evidence="2">
    <location>
        <begin position="109"/>
        <end position="129"/>
    </location>
</feature>
<feature type="topological domain" description="Cytoplasmic" evidence="2">
    <location>
        <begin position="130"/>
        <end position="141"/>
    </location>
</feature>
<feature type="transmembrane region" description="Helical" evidence="2">
    <location>
        <begin position="142"/>
        <end position="162"/>
    </location>
</feature>
<feature type="topological domain" description="Extracellular" evidence="2">
    <location>
        <begin position="163"/>
        <end position="165"/>
    </location>
</feature>
<feature type="transmembrane region" description="Helical" evidence="2">
    <location>
        <begin position="166"/>
        <end position="186"/>
    </location>
</feature>
<feature type="topological domain" description="Cytoplasmic" evidence="2">
    <location>
        <begin position="187"/>
        <end position="189"/>
    </location>
</feature>
<feature type="transmembrane region" description="Helical" evidence="2">
    <location>
        <begin position="190"/>
        <end position="210"/>
    </location>
</feature>
<feature type="topological domain" description="Extracellular" evidence="2">
    <location>
        <begin position="211"/>
        <end position="285"/>
    </location>
</feature>
<feature type="transmembrane region" description="Helical" evidence="2">
    <location>
        <begin position="286"/>
        <end position="306"/>
    </location>
</feature>
<feature type="topological domain" description="Cytoplasmic" evidence="2">
    <location>
        <begin position="307"/>
        <end position="309"/>
    </location>
</feature>
<feature type="transmembrane region" description="Helical" evidence="2">
    <location>
        <begin position="310"/>
        <end position="330"/>
    </location>
</feature>
<feature type="transmembrane region" description="Helical" evidence="2">
    <location>
        <begin position="331"/>
        <end position="351"/>
    </location>
</feature>
<feature type="topological domain" description="Extracellular" evidence="2">
    <location>
        <begin position="352"/>
        <end position="354"/>
    </location>
</feature>
<feature type="transmembrane region" description="Helical" evidence="2">
    <location>
        <begin position="355"/>
        <end position="375"/>
    </location>
</feature>
<feature type="topological domain" description="Cytoplasmic" evidence="2">
    <location>
        <begin position="376"/>
        <end position="403"/>
    </location>
</feature>
<comment type="function">
    <text evidence="1 5">Peptidoglycan polymerase that is essential for cell division.</text>
</comment>
<comment type="catalytic activity">
    <reaction evidence="1">
        <text>[GlcNAc-(1-&gt;4)-Mur2Ac(oyl-L-Ala-gamma-D-Glu-L-Lys-D-Ala-D-Ala)](n)-di-trans,octa-cis-undecaprenyl diphosphate + beta-D-GlcNAc-(1-&gt;4)-Mur2Ac(oyl-L-Ala-gamma-D-Glu-L-Lys-D-Ala-D-Ala)-di-trans,octa-cis-undecaprenyl diphosphate = [GlcNAc-(1-&gt;4)-Mur2Ac(oyl-L-Ala-gamma-D-Glu-L-Lys-D-Ala-D-Ala)](n+1)-di-trans,octa-cis-undecaprenyl diphosphate + di-trans,octa-cis-undecaprenyl diphosphate + H(+)</text>
        <dbReference type="Rhea" id="RHEA:23708"/>
        <dbReference type="Rhea" id="RHEA-COMP:9602"/>
        <dbReference type="Rhea" id="RHEA-COMP:9603"/>
        <dbReference type="ChEBI" id="CHEBI:15378"/>
        <dbReference type="ChEBI" id="CHEBI:58405"/>
        <dbReference type="ChEBI" id="CHEBI:60033"/>
        <dbReference type="ChEBI" id="CHEBI:78435"/>
        <dbReference type="EC" id="2.4.99.28"/>
    </reaction>
</comment>
<comment type="pathway">
    <text evidence="1">Cell wall biogenesis; peptidoglycan biosynthesis.</text>
</comment>
<comment type="subcellular location">
    <subcellularLocation>
        <location evidence="1">Cell membrane</location>
        <topology evidence="2">Multi-pass membrane protein</topology>
    </subcellularLocation>
    <text>Localizes to the division septum.</text>
</comment>
<comment type="induction">
    <text evidence="3">Expression is regulated by YofA.</text>
</comment>
<comment type="similarity">
    <text evidence="4">Belongs to the SEDS family. FtsW subfamily.</text>
</comment>
<protein>
    <recommendedName>
        <fullName evidence="1">Probable peptidoglycan glycosyltransferase FtsW</fullName>
        <shortName evidence="1">PGT</shortName>
        <ecNumber evidence="1">2.4.99.28</ecNumber>
    </recommendedName>
    <alternativeName>
        <fullName evidence="4">Cell division protein FtsW</fullName>
    </alternativeName>
    <alternativeName>
        <fullName evidence="1">Cell wall polymerase</fullName>
    </alternativeName>
    <alternativeName>
        <fullName evidence="1">Peptidoglycan polymerase</fullName>
        <shortName evidence="1">PG polymerase</shortName>
    </alternativeName>
</protein>
<accession>O07639</accession>
<keyword id="KW-0131">Cell cycle</keyword>
<keyword id="KW-0132">Cell division</keyword>
<keyword id="KW-1003">Cell membrane</keyword>
<keyword id="KW-0133">Cell shape</keyword>
<keyword id="KW-0961">Cell wall biogenesis/degradation</keyword>
<keyword id="KW-0328">Glycosyltransferase</keyword>
<keyword id="KW-0472">Membrane</keyword>
<keyword id="KW-0573">Peptidoglycan synthesis</keyword>
<keyword id="KW-1185">Reference proteome</keyword>
<keyword id="KW-0808">Transferase</keyword>
<keyword id="KW-0812">Transmembrane</keyword>
<keyword id="KW-1133">Transmembrane helix</keyword>
<name>FTSW_BACSU</name>
<dbReference type="EC" id="2.4.99.28" evidence="1"/>
<dbReference type="EMBL" id="Z97025">
    <property type="protein sequence ID" value="CAB09720.1"/>
    <property type="molecule type" value="Genomic_DNA"/>
</dbReference>
<dbReference type="EMBL" id="AL009126">
    <property type="protein sequence ID" value="CAB13358.1"/>
    <property type="molecule type" value="Genomic_DNA"/>
</dbReference>
<dbReference type="PIR" id="E69873">
    <property type="entry name" value="E69873"/>
</dbReference>
<dbReference type="RefSeq" id="NP_389368.1">
    <property type="nucleotide sequence ID" value="NC_000964.3"/>
</dbReference>
<dbReference type="RefSeq" id="WP_009967159.1">
    <property type="nucleotide sequence ID" value="NZ_OZ025638.1"/>
</dbReference>
<dbReference type="SMR" id="O07639"/>
<dbReference type="FunCoup" id="O07639">
    <property type="interactions" value="5"/>
</dbReference>
<dbReference type="IntAct" id="O07639">
    <property type="interactions" value="9"/>
</dbReference>
<dbReference type="STRING" id="224308.BSU14850"/>
<dbReference type="PaxDb" id="224308-BSU14850"/>
<dbReference type="EnsemblBacteria" id="CAB13358">
    <property type="protein sequence ID" value="CAB13358"/>
    <property type="gene ID" value="BSU_14850"/>
</dbReference>
<dbReference type="GeneID" id="935918"/>
<dbReference type="KEGG" id="bsu:BSU14850"/>
<dbReference type="PATRIC" id="fig|224308.179.peg.1619"/>
<dbReference type="eggNOG" id="COG0772">
    <property type="taxonomic scope" value="Bacteria"/>
</dbReference>
<dbReference type="InParanoid" id="O07639"/>
<dbReference type="OrthoDB" id="9768187at2"/>
<dbReference type="PhylomeDB" id="O07639"/>
<dbReference type="BioCyc" id="BSUB:BSU14850-MONOMER"/>
<dbReference type="UniPathway" id="UPA00219"/>
<dbReference type="Proteomes" id="UP000001570">
    <property type="component" value="Chromosome"/>
</dbReference>
<dbReference type="GO" id="GO:0032153">
    <property type="term" value="C:cell division site"/>
    <property type="evidence" value="ECO:0000318"/>
    <property type="project" value="GO_Central"/>
</dbReference>
<dbReference type="GO" id="GO:0005886">
    <property type="term" value="C:plasma membrane"/>
    <property type="evidence" value="ECO:0000318"/>
    <property type="project" value="GO_Central"/>
</dbReference>
<dbReference type="GO" id="GO:0015648">
    <property type="term" value="F:lipid-linked peptidoglycan transporter activity"/>
    <property type="evidence" value="ECO:0000318"/>
    <property type="project" value="GO_Central"/>
</dbReference>
<dbReference type="GO" id="GO:0008955">
    <property type="term" value="F:peptidoglycan glycosyltransferase activity"/>
    <property type="evidence" value="ECO:0007669"/>
    <property type="project" value="RHEA"/>
</dbReference>
<dbReference type="GO" id="GO:0051301">
    <property type="term" value="P:cell division"/>
    <property type="evidence" value="ECO:0000318"/>
    <property type="project" value="GO_Central"/>
</dbReference>
<dbReference type="GO" id="GO:0071555">
    <property type="term" value="P:cell wall organization"/>
    <property type="evidence" value="ECO:0007669"/>
    <property type="project" value="UniProtKB-KW"/>
</dbReference>
<dbReference type="GO" id="GO:0009252">
    <property type="term" value="P:peptidoglycan biosynthetic process"/>
    <property type="evidence" value="ECO:0007669"/>
    <property type="project" value="UniProtKB-UniPathway"/>
</dbReference>
<dbReference type="GO" id="GO:0008360">
    <property type="term" value="P:regulation of cell shape"/>
    <property type="evidence" value="ECO:0000318"/>
    <property type="project" value="GO_Central"/>
</dbReference>
<dbReference type="InterPro" id="IPR018365">
    <property type="entry name" value="Cell_cycle_FtsW-rel_CS"/>
</dbReference>
<dbReference type="InterPro" id="IPR001182">
    <property type="entry name" value="FtsW/RodA"/>
</dbReference>
<dbReference type="PANTHER" id="PTHR30474">
    <property type="entry name" value="CELL CYCLE PROTEIN"/>
    <property type="match status" value="1"/>
</dbReference>
<dbReference type="PANTHER" id="PTHR30474:SF2">
    <property type="entry name" value="PEPTIDOGLYCAN GLYCOSYLTRANSFERASE FTSW-RELATED"/>
    <property type="match status" value="1"/>
</dbReference>
<dbReference type="Pfam" id="PF01098">
    <property type="entry name" value="FTSW_RODA_SPOVE"/>
    <property type="match status" value="1"/>
</dbReference>
<dbReference type="PROSITE" id="PS00428">
    <property type="entry name" value="FTSW_RODA_SPOVE"/>
    <property type="match status" value="1"/>
</dbReference>
<reference key="1">
    <citation type="submission" date="1997-06" db="EMBL/GenBank/DDBJ databases">
        <authorList>
            <person name="Purnelle B."/>
            <person name="Presecan E."/>
            <person name="Glaser P."/>
            <person name="Richou A."/>
            <person name="Danchin A."/>
            <person name="Goffeau A."/>
        </authorList>
    </citation>
    <scope>NUCLEOTIDE SEQUENCE [GENOMIC DNA]</scope>
    <source>
        <strain>168</strain>
    </source>
</reference>
<reference key="2">
    <citation type="journal article" date="1997" name="Nature">
        <title>The complete genome sequence of the Gram-positive bacterium Bacillus subtilis.</title>
        <authorList>
            <person name="Kunst F."/>
            <person name="Ogasawara N."/>
            <person name="Moszer I."/>
            <person name="Albertini A.M."/>
            <person name="Alloni G."/>
            <person name="Azevedo V."/>
            <person name="Bertero M.G."/>
            <person name="Bessieres P."/>
            <person name="Bolotin A."/>
            <person name="Borchert S."/>
            <person name="Borriss R."/>
            <person name="Boursier L."/>
            <person name="Brans A."/>
            <person name="Braun M."/>
            <person name="Brignell S.C."/>
            <person name="Bron S."/>
            <person name="Brouillet S."/>
            <person name="Bruschi C.V."/>
            <person name="Caldwell B."/>
            <person name="Capuano V."/>
            <person name="Carter N.M."/>
            <person name="Choi S.-K."/>
            <person name="Codani J.-J."/>
            <person name="Connerton I.F."/>
            <person name="Cummings N.J."/>
            <person name="Daniel R.A."/>
            <person name="Denizot F."/>
            <person name="Devine K.M."/>
            <person name="Duesterhoeft A."/>
            <person name="Ehrlich S.D."/>
            <person name="Emmerson P.T."/>
            <person name="Entian K.-D."/>
            <person name="Errington J."/>
            <person name="Fabret C."/>
            <person name="Ferrari E."/>
            <person name="Foulger D."/>
            <person name="Fritz C."/>
            <person name="Fujita M."/>
            <person name="Fujita Y."/>
            <person name="Fuma S."/>
            <person name="Galizzi A."/>
            <person name="Galleron N."/>
            <person name="Ghim S.-Y."/>
            <person name="Glaser P."/>
            <person name="Goffeau A."/>
            <person name="Golightly E.J."/>
            <person name="Grandi G."/>
            <person name="Guiseppi G."/>
            <person name="Guy B.J."/>
            <person name="Haga K."/>
            <person name="Haiech J."/>
            <person name="Harwood C.R."/>
            <person name="Henaut A."/>
            <person name="Hilbert H."/>
            <person name="Holsappel S."/>
            <person name="Hosono S."/>
            <person name="Hullo M.-F."/>
            <person name="Itaya M."/>
            <person name="Jones L.-M."/>
            <person name="Joris B."/>
            <person name="Karamata D."/>
            <person name="Kasahara Y."/>
            <person name="Klaerr-Blanchard M."/>
            <person name="Klein C."/>
            <person name="Kobayashi Y."/>
            <person name="Koetter P."/>
            <person name="Koningstein G."/>
            <person name="Krogh S."/>
            <person name="Kumano M."/>
            <person name="Kurita K."/>
            <person name="Lapidus A."/>
            <person name="Lardinois S."/>
            <person name="Lauber J."/>
            <person name="Lazarevic V."/>
            <person name="Lee S.-M."/>
            <person name="Levine A."/>
            <person name="Liu H."/>
            <person name="Masuda S."/>
            <person name="Mauel C."/>
            <person name="Medigue C."/>
            <person name="Medina N."/>
            <person name="Mellado R.P."/>
            <person name="Mizuno M."/>
            <person name="Moestl D."/>
            <person name="Nakai S."/>
            <person name="Noback M."/>
            <person name="Noone D."/>
            <person name="O'Reilly M."/>
            <person name="Ogawa K."/>
            <person name="Ogiwara A."/>
            <person name="Oudega B."/>
            <person name="Park S.-H."/>
            <person name="Parro V."/>
            <person name="Pohl T.M."/>
            <person name="Portetelle D."/>
            <person name="Porwollik S."/>
            <person name="Prescott A.M."/>
            <person name="Presecan E."/>
            <person name="Pujic P."/>
            <person name="Purnelle B."/>
            <person name="Rapoport G."/>
            <person name="Rey M."/>
            <person name="Reynolds S."/>
            <person name="Rieger M."/>
            <person name="Rivolta C."/>
            <person name="Rocha E."/>
            <person name="Roche B."/>
            <person name="Rose M."/>
            <person name="Sadaie Y."/>
            <person name="Sato T."/>
            <person name="Scanlan E."/>
            <person name="Schleich S."/>
            <person name="Schroeter R."/>
            <person name="Scoffone F."/>
            <person name="Sekiguchi J."/>
            <person name="Sekowska A."/>
            <person name="Seror S.J."/>
            <person name="Serror P."/>
            <person name="Shin B.-S."/>
            <person name="Soldo B."/>
            <person name="Sorokin A."/>
            <person name="Tacconi E."/>
            <person name="Takagi T."/>
            <person name="Takahashi H."/>
            <person name="Takemaru K."/>
            <person name="Takeuchi M."/>
            <person name="Tamakoshi A."/>
            <person name="Tanaka T."/>
            <person name="Terpstra P."/>
            <person name="Tognoni A."/>
            <person name="Tosato V."/>
            <person name="Uchiyama S."/>
            <person name="Vandenbol M."/>
            <person name="Vannier F."/>
            <person name="Vassarotti A."/>
            <person name="Viari A."/>
            <person name="Wambutt R."/>
            <person name="Wedler E."/>
            <person name="Wedler H."/>
            <person name="Weitzenegger T."/>
            <person name="Winters P."/>
            <person name="Wipat A."/>
            <person name="Yamamoto H."/>
            <person name="Yamane K."/>
            <person name="Yasumoto K."/>
            <person name="Yata K."/>
            <person name="Yoshida K."/>
            <person name="Yoshikawa H.-F."/>
            <person name="Zumstein E."/>
            <person name="Yoshikawa H."/>
            <person name="Danchin A."/>
        </authorList>
    </citation>
    <scope>NUCLEOTIDE SEQUENCE [LARGE SCALE GENOMIC DNA]</scope>
    <source>
        <strain>168</strain>
    </source>
</reference>
<reference key="3">
    <citation type="journal article" date="2007" name="J. Bacteriol.">
        <title>The LysR-type transcriptional regulator YofA controls cell division through the regulation of expression of ftsW in Bacillus subtilis.</title>
        <authorList>
            <person name="Lu Z."/>
            <person name="Takeuchi M."/>
            <person name="Sato T."/>
        </authorList>
    </citation>
    <scope>FUNCTION IN CELL DIVISION</scope>
    <scope>INDUCTION</scope>
    <source>
        <strain>168</strain>
    </source>
</reference>
<gene>
    <name type="primary">ftsW</name>
    <name type="synonym">ylaO</name>
    <name type="ordered locus">BSU14850</name>
</gene>
<organism>
    <name type="scientific">Bacillus subtilis (strain 168)</name>
    <dbReference type="NCBI Taxonomy" id="224308"/>
    <lineage>
        <taxon>Bacteria</taxon>
        <taxon>Bacillati</taxon>
        <taxon>Bacillota</taxon>
        <taxon>Bacilli</taxon>
        <taxon>Bacillales</taxon>
        <taxon>Bacillaceae</taxon>
        <taxon>Bacillus</taxon>
    </lineage>
</organism>
<proteinExistence type="evidence at protein level"/>
<sequence>MLKKMLKSYDYSLIFAIVLLCGFGLVMVYSSSMITAVSRYGVSSNFFFMRQLFALIAGGALFILMALFPYKALAHQKFQKGILLVSVLALISLFVFGHVAGNAQSWFKIGGMSIQPGEFVKLVVILYLAAVYAKKQSYIDHLLTGVAPPVVMTLIICGLIAMQPDFGTAMIIGLIATCMILCSGFSGKTLVRLVILGGIVFILVSPIIYLNQDKILTEGRLARFESLEDPFKYANSSGLQVINSYYAISSGGIFGLGLGESIQKYGYLPESHTDFIMAVIAEELGIFGVLFVIFLLGFVVIKGFYIARKCEDPFGSLLAIGISSMIAIQSFINLGGVSGLIPITGVTLPFISYGGSSLVLLLGSMGILANISMFVKYSENKKKKEPLAPKGMKKKQLKKTVYL</sequence>
<evidence type="ECO:0000250" key="1">
    <source>
        <dbReference type="UniProtKB" id="P39604"/>
    </source>
</evidence>
<evidence type="ECO:0000255" key="2"/>
<evidence type="ECO:0000269" key="3">
    <source>
    </source>
</evidence>
<evidence type="ECO:0000305" key="4"/>
<evidence type="ECO:0000305" key="5">
    <source>
    </source>
</evidence>